<comment type="function">
    <text evidence="1">Catalyzes the reversible phosphatidyl group transfer from one phosphatidylglycerol molecule to another to form cardiolipin (CL) (diphosphatidylglycerol) and glycerol.</text>
</comment>
<comment type="catalytic activity">
    <reaction evidence="1">
        <text>2 a 1,2-diacyl-sn-glycero-3-phospho-(1'-sn-glycerol) = a cardiolipin + glycerol</text>
        <dbReference type="Rhea" id="RHEA:31451"/>
        <dbReference type="ChEBI" id="CHEBI:17754"/>
        <dbReference type="ChEBI" id="CHEBI:62237"/>
        <dbReference type="ChEBI" id="CHEBI:64716"/>
    </reaction>
</comment>
<comment type="subcellular location">
    <subcellularLocation>
        <location evidence="1">Cell inner membrane</location>
        <topology evidence="1">Multi-pass membrane protein</topology>
    </subcellularLocation>
</comment>
<comment type="similarity">
    <text evidence="1">Belongs to the phospholipase D family. Cardiolipin synthase subfamily. ClsA sub-subfamily.</text>
</comment>
<name>CLSA_ECO81</name>
<organism>
    <name type="scientific">Escherichia coli O81 (strain ED1a)</name>
    <dbReference type="NCBI Taxonomy" id="585397"/>
    <lineage>
        <taxon>Bacteria</taxon>
        <taxon>Pseudomonadati</taxon>
        <taxon>Pseudomonadota</taxon>
        <taxon>Gammaproteobacteria</taxon>
        <taxon>Enterobacterales</taxon>
        <taxon>Enterobacteriaceae</taxon>
        <taxon>Escherichia</taxon>
    </lineage>
</organism>
<gene>
    <name evidence="1" type="primary">clsA</name>
    <name type="synonym">cls</name>
    <name type="ordered locus">ECED1_1401</name>
</gene>
<dbReference type="EC" id="2.7.8.-" evidence="1"/>
<dbReference type="EMBL" id="CU928162">
    <property type="protein sequence ID" value="CAR07600.1"/>
    <property type="molecule type" value="Genomic_DNA"/>
</dbReference>
<dbReference type="RefSeq" id="WP_000214516.1">
    <property type="nucleotide sequence ID" value="NC_011745.1"/>
</dbReference>
<dbReference type="SMR" id="B7MU36"/>
<dbReference type="GeneID" id="93775314"/>
<dbReference type="KEGG" id="ecq:ECED1_1401"/>
<dbReference type="HOGENOM" id="CLU_038053_1_0_6"/>
<dbReference type="Proteomes" id="UP000000748">
    <property type="component" value="Chromosome"/>
</dbReference>
<dbReference type="GO" id="GO:0005886">
    <property type="term" value="C:plasma membrane"/>
    <property type="evidence" value="ECO:0007669"/>
    <property type="project" value="UniProtKB-SubCell"/>
</dbReference>
<dbReference type="GO" id="GO:0008808">
    <property type="term" value="F:cardiolipin synthase activity"/>
    <property type="evidence" value="ECO:0007669"/>
    <property type="project" value="InterPro"/>
</dbReference>
<dbReference type="GO" id="GO:0032049">
    <property type="term" value="P:cardiolipin biosynthetic process"/>
    <property type="evidence" value="ECO:0007669"/>
    <property type="project" value="InterPro"/>
</dbReference>
<dbReference type="CDD" id="cd09152">
    <property type="entry name" value="PLDc_EcCLS_like_1"/>
    <property type="match status" value="1"/>
</dbReference>
<dbReference type="CDD" id="cd09158">
    <property type="entry name" value="PLDc_EcCLS_like_2"/>
    <property type="match status" value="1"/>
</dbReference>
<dbReference type="FunFam" id="3.30.870.10:FF:000002">
    <property type="entry name" value="Cardiolipin synthase A"/>
    <property type="match status" value="1"/>
</dbReference>
<dbReference type="FunFam" id="3.30.870.10:FF:000003">
    <property type="entry name" value="Cardiolipin synthase A"/>
    <property type="match status" value="1"/>
</dbReference>
<dbReference type="Gene3D" id="3.30.870.10">
    <property type="entry name" value="Endonuclease Chain A"/>
    <property type="match status" value="2"/>
</dbReference>
<dbReference type="HAMAP" id="MF_00190">
    <property type="entry name" value="Cardiolipin_synth_ClsA"/>
    <property type="match status" value="1"/>
</dbReference>
<dbReference type="InterPro" id="IPR022924">
    <property type="entry name" value="Cardiolipin_synthase"/>
</dbReference>
<dbReference type="InterPro" id="IPR030840">
    <property type="entry name" value="CL_synthase_A"/>
</dbReference>
<dbReference type="InterPro" id="IPR027379">
    <property type="entry name" value="CLS_N"/>
</dbReference>
<dbReference type="InterPro" id="IPR025202">
    <property type="entry name" value="PLD-like_dom"/>
</dbReference>
<dbReference type="InterPro" id="IPR001736">
    <property type="entry name" value="PLipase_D/transphosphatidylase"/>
</dbReference>
<dbReference type="NCBIfam" id="TIGR04265">
    <property type="entry name" value="bac_cardiolipin"/>
    <property type="match status" value="1"/>
</dbReference>
<dbReference type="PANTHER" id="PTHR21248">
    <property type="entry name" value="CARDIOLIPIN SYNTHASE"/>
    <property type="match status" value="1"/>
</dbReference>
<dbReference type="PANTHER" id="PTHR21248:SF22">
    <property type="entry name" value="PHOSPHOLIPASE D"/>
    <property type="match status" value="1"/>
</dbReference>
<dbReference type="Pfam" id="PF13091">
    <property type="entry name" value="PLDc_2"/>
    <property type="match status" value="2"/>
</dbReference>
<dbReference type="Pfam" id="PF13396">
    <property type="entry name" value="PLDc_N"/>
    <property type="match status" value="1"/>
</dbReference>
<dbReference type="SMART" id="SM00155">
    <property type="entry name" value="PLDc"/>
    <property type="match status" value="2"/>
</dbReference>
<dbReference type="SUPFAM" id="SSF56024">
    <property type="entry name" value="Phospholipase D/nuclease"/>
    <property type="match status" value="2"/>
</dbReference>
<dbReference type="PROSITE" id="PS50035">
    <property type="entry name" value="PLD"/>
    <property type="match status" value="2"/>
</dbReference>
<evidence type="ECO:0000255" key="1">
    <source>
        <dbReference type="HAMAP-Rule" id="MF_00190"/>
    </source>
</evidence>
<proteinExistence type="inferred from homology"/>
<sequence>MTTVYTLVSWLAILGYWLLIAGVTLRILMKRRAVPSAMAWLLIIYILPLVGIIAYLAVGELHLGKRRAERARAMWPSTAKWLNDLKACKHIFAEENSSVAAPLFKLCERRQGIAGVKGNQLQLMTESDDVMQALIRDIQLARHNIEMVFYIWQPGGMADQVAESLMAAARRGIHCRLMLDSAGSVAFFRSPWPELMRNAGIEVVEALKVNLMRVFLRRMDLRQHRKMIMIDNYIAYTGSMNMVDPRYFKQDAGVGQWIDLMARMEGPIATAMGIIYSCDWEIETGKRILPPPPDVNIMPFEQASGHTIHTIASGPGFPEDLIHQALLTAAYSAREYLIMTTPYFVPSDDLLHAICTAAQRGVDVSIILPRKNDSMLVGWASRAFFTELLAAGVKIYQFEGGLLHTKSVLVDGELSLVGTVNLDMRSLWLNFEITLAIDDKGFGADLAAVQDDYISRSRLLDARLWLKRPLWQRVAERLFYFFSPLL</sequence>
<reference key="1">
    <citation type="journal article" date="2009" name="PLoS Genet.">
        <title>Organised genome dynamics in the Escherichia coli species results in highly diverse adaptive paths.</title>
        <authorList>
            <person name="Touchon M."/>
            <person name="Hoede C."/>
            <person name="Tenaillon O."/>
            <person name="Barbe V."/>
            <person name="Baeriswyl S."/>
            <person name="Bidet P."/>
            <person name="Bingen E."/>
            <person name="Bonacorsi S."/>
            <person name="Bouchier C."/>
            <person name="Bouvet O."/>
            <person name="Calteau A."/>
            <person name="Chiapello H."/>
            <person name="Clermont O."/>
            <person name="Cruveiller S."/>
            <person name="Danchin A."/>
            <person name="Diard M."/>
            <person name="Dossat C."/>
            <person name="Karoui M.E."/>
            <person name="Frapy E."/>
            <person name="Garry L."/>
            <person name="Ghigo J.M."/>
            <person name="Gilles A.M."/>
            <person name="Johnson J."/>
            <person name="Le Bouguenec C."/>
            <person name="Lescat M."/>
            <person name="Mangenot S."/>
            <person name="Martinez-Jehanne V."/>
            <person name="Matic I."/>
            <person name="Nassif X."/>
            <person name="Oztas S."/>
            <person name="Petit M.A."/>
            <person name="Pichon C."/>
            <person name="Rouy Z."/>
            <person name="Ruf C.S."/>
            <person name="Schneider D."/>
            <person name="Tourret J."/>
            <person name="Vacherie B."/>
            <person name="Vallenet D."/>
            <person name="Medigue C."/>
            <person name="Rocha E.P.C."/>
            <person name="Denamur E."/>
        </authorList>
    </citation>
    <scope>NUCLEOTIDE SEQUENCE [LARGE SCALE GENOMIC DNA]</scope>
    <source>
        <strain>ED1a</strain>
    </source>
</reference>
<feature type="chain" id="PRO_1000124268" description="Cardiolipin synthase A">
    <location>
        <begin position="1"/>
        <end position="486"/>
    </location>
</feature>
<feature type="transmembrane region" description="Helical" evidence="1">
    <location>
        <begin position="3"/>
        <end position="23"/>
    </location>
</feature>
<feature type="transmembrane region" description="Helical" evidence="1">
    <location>
        <begin position="38"/>
        <end position="58"/>
    </location>
</feature>
<feature type="domain" description="PLD phosphodiesterase 1" evidence="1">
    <location>
        <begin position="219"/>
        <end position="246"/>
    </location>
</feature>
<feature type="domain" description="PLD phosphodiesterase 2" evidence="1">
    <location>
        <begin position="399"/>
        <end position="426"/>
    </location>
</feature>
<feature type="active site" evidence="1">
    <location>
        <position position="224"/>
    </location>
</feature>
<feature type="active site" evidence="1">
    <location>
        <position position="226"/>
    </location>
</feature>
<feature type="active site" evidence="1">
    <location>
        <position position="231"/>
    </location>
</feature>
<feature type="active site" evidence="1">
    <location>
        <position position="404"/>
    </location>
</feature>
<feature type="active site" evidence="1">
    <location>
        <position position="406"/>
    </location>
</feature>
<feature type="active site" evidence="1">
    <location>
        <position position="411"/>
    </location>
</feature>
<accession>B7MU36</accession>
<keyword id="KW-0997">Cell inner membrane</keyword>
<keyword id="KW-1003">Cell membrane</keyword>
<keyword id="KW-0444">Lipid biosynthesis</keyword>
<keyword id="KW-0443">Lipid metabolism</keyword>
<keyword id="KW-0472">Membrane</keyword>
<keyword id="KW-0594">Phospholipid biosynthesis</keyword>
<keyword id="KW-1208">Phospholipid metabolism</keyword>
<keyword id="KW-0677">Repeat</keyword>
<keyword id="KW-0808">Transferase</keyword>
<keyword id="KW-0812">Transmembrane</keyword>
<keyword id="KW-1133">Transmembrane helix</keyword>
<protein>
    <recommendedName>
        <fullName evidence="1">Cardiolipin synthase A</fullName>
        <shortName evidence="1">CL synthase</shortName>
        <ecNumber evidence="1">2.7.8.-</ecNumber>
    </recommendedName>
</protein>